<evidence type="ECO:0000255" key="1">
    <source>
        <dbReference type="HAMAP-Rule" id="MF_01320"/>
    </source>
</evidence>
<evidence type="ECO:0000256" key="2">
    <source>
        <dbReference type="SAM" id="MobiDB-lite"/>
    </source>
</evidence>
<evidence type="ECO:0000305" key="3"/>
<reference key="1">
    <citation type="submission" date="2007-05" db="EMBL/GenBank/DDBJ databases">
        <title>Complete sequence of chromosome of Psychrobacter sp. PRwf-1.</title>
        <authorList>
            <consortium name="US DOE Joint Genome Institute"/>
            <person name="Copeland A."/>
            <person name="Lucas S."/>
            <person name="Lapidus A."/>
            <person name="Barry K."/>
            <person name="Detter J.C."/>
            <person name="Glavina del Rio T."/>
            <person name="Hammon N."/>
            <person name="Israni S."/>
            <person name="Dalin E."/>
            <person name="Tice H."/>
            <person name="Pitluck S."/>
            <person name="Chain P."/>
            <person name="Malfatti S."/>
            <person name="Shin M."/>
            <person name="Vergez L."/>
            <person name="Schmutz J."/>
            <person name="Larimer F."/>
            <person name="Land M."/>
            <person name="Hauser L."/>
            <person name="Kyrpides N."/>
            <person name="Kim E."/>
            <person name="Tiedje J."/>
            <person name="Richardson P."/>
        </authorList>
    </citation>
    <scope>NUCLEOTIDE SEQUENCE [LARGE SCALE GENOMIC DNA]</scope>
    <source>
        <strain>PRwf-1</strain>
    </source>
</reference>
<feature type="chain" id="PRO_1000073233" description="Large ribosomal subunit protein uL2">
    <location>
        <begin position="1"/>
        <end position="276"/>
    </location>
</feature>
<feature type="region of interest" description="Disordered" evidence="2">
    <location>
        <begin position="33"/>
        <end position="55"/>
    </location>
</feature>
<feature type="region of interest" description="Disordered" evidence="2">
    <location>
        <begin position="221"/>
        <end position="276"/>
    </location>
</feature>
<name>RL2_PSYWF</name>
<keyword id="KW-0687">Ribonucleoprotein</keyword>
<keyword id="KW-0689">Ribosomal protein</keyword>
<keyword id="KW-0694">RNA-binding</keyword>
<keyword id="KW-0699">rRNA-binding</keyword>
<protein>
    <recommendedName>
        <fullName evidence="1">Large ribosomal subunit protein uL2</fullName>
    </recommendedName>
    <alternativeName>
        <fullName evidence="3">50S ribosomal protein L2</fullName>
    </alternativeName>
</protein>
<comment type="function">
    <text evidence="1">One of the primary rRNA binding proteins. Required for association of the 30S and 50S subunits to form the 70S ribosome, for tRNA binding and peptide bond formation. It has been suggested to have peptidyltransferase activity; this is somewhat controversial. Makes several contacts with the 16S rRNA in the 70S ribosome.</text>
</comment>
<comment type="subunit">
    <text evidence="1">Part of the 50S ribosomal subunit. Forms a bridge to the 30S subunit in the 70S ribosome.</text>
</comment>
<comment type="similarity">
    <text evidence="1">Belongs to the universal ribosomal protein uL2 family.</text>
</comment>
<accession>A5WCJ3</accession>
<gene>
    <name evidence="1" type="primary">rplB</name>
    <name type="ordered locus">PsycPRwf_0429</name>
</gene>
<proteinExistence type="inferred from homology"/>
<sequence>MPIVKAKPTSPGRRFVEKVVHPHLYKGRPHAPLVEAQGRSGGRNNNGRITSRHIGGGHKQHYRIIDFKRTKDNIPATVERIEYDPNRTAHIALLKYADGERRYIIAPKKLKVGDTVLSGEASPIRPGNCLPLKNIPVGTTISNIELKIGKGAQMARSAGASVQLLGKEGIYAILRLRSGETRRVHVNCRAVIGEVSNTENNLKSLGKAGASRWRGVRPTVRGTAMNPVDHPHGGGEGRTMGKHPTTPWGQKTKGLKTRSNKRTDSMIIRRRRAKKK</sequence>
<organism>
    <name type="scientific">Psychrobacter sp. (strain PRwf-1)</name>
    <dbReference type="NCBI Taxonomy" id="349106"/>
    <lineage>
        <taxon>Bacteria</taxon>
        <taxon>Pseudomonadati</taxon>
        <taxon>Pseudomonadota</taxon>
        <taxon>Gammaproteobacteria</taxon>
        <taxon>Moraxellales</taxon>
        <taxon>Moraxellaceae</taxon>
        <taxon>Psychrobacter</taxon>
    </lineage>
</organism>
<dbReference type="EMBL" id="CP000713">
    <property type="protein sequence ID" value="ABQ93384.1"/>
    <property type="molecule type" value="Genomic_DNA"/>
</dbReference>
<dbReference type="SMR" id="A5WCJ3"/>
<dbReference type="STRING" id="349106.PsycPRwf_0429"/>
<dbReference type="KEGG" id="prw:PsycPRwf_0429"/>
<dbReference type="eggNOG" id="COG0090">
    <property type="taxonomic scope" value="Bacteria"/>
</dbReference>
<dbReference type="HOGENOM" id="CLU_036235_2_1_6"/>
<dbReference type="GO" id="GO:0015934">
    <property type="term" value="C:large ribosomal subunit"/>
    <property type="evidence" value="ECO:0007669"/>
    <property type="project" value="InterPro"/>
</dbReference>
<dbReference type="GO" id="GO:0019843">
    <property type="term" value="F:rRNA binding"/>
    <property type="evidence" value="ECO:0007669"/>
    <property type="project" value="UniProtKB-UniRule"/>
</dbReference>
<dbReference type="GO" id="GO:0003735">
    <property type="term" value="F:structural constituent of ribosome"/>
    <property type="evidence" value="ECO:0007669"/>
    <property type="project" value="InterPro"/>
</dbReference>
<dbReference type="GO" id="GO:0016740">
    <property type="term" value="F:transferase activity"/>
    <property type="evidence" value="ECO:0007669"/>
    <property type="project" value="InterPro"/>
</dbReference>
<dbReference type="GO" id="GO:0002181">
    <property type="term" value="P:cytoplasmic translation"/>
    <property type="evidence" value="ECO:0007669"/>
    <property type="project" value="TreeGrafter"/>
</dbReference>
<dbReference type="FunFam" id="2.30.30.30:FF:000001">
    <property type="entry name" value="50S ribosomal protein L2"/>
    <property type="match status" value="1"/>
</dbReference>
<dbReference type="FunFam" id="2.40.50.140:FF:000003">
    <property type="entry name" value="50S ribosomal protein L2"/>
    <property type="match status" value="1"/>
</dbReference>
<dbReference type="FunFam" id="4.10.950.10:FF:000001">
    <property type="entry name" value="50S ribosomal protein L2"/>
    <property type="match status" value="1"/>
</dbReference>
<dbReference type="Gene3D" id="2.30.30.30">
    <property type="match status" value="1"/>
</dbReference>
<dbReference type="Gene3D" id="2.40.50.140">
    <property type="entry name" value="Nucleic acid-binding proteins"/>
    <property type="match status" value="1"/>
</dbReference>
<dbReference type="Gene3D" id="4.10.950.10">
    <property type="entry name" value="Ribosomal protein L2, domain 3"/>
    <property type="match status" value="1"/>
</dbReference>
<dbReference type="HAMAP" id="MF_01320_B">
    <property type="entry name" value="Ribosomal_uL2_B"/>
    <property type="match status" value="1"/>
</dbReference>
<dbReference type="InterPro" id="IPR012340">
    <property type="entry name" value="NA-bd_OB-fold"/>
</dbReference>
<dbReference type="InterPro" id="IPR014722">
    <property type="entry name" value="Rib_uL2_dom2"/>
</dbReference>
<dbReference type="InterPro" id="IPR002171">
    <property type="entry name" value="Ribosomal_uL2"/>
</dbReference>
<dbReference type="InterPro" id="IPR005880">
    <property type="entry name" value="Ribosomal_uL2_bac/org-type"/>
</dbReference>
<dbReference type="InterPro" id="IPR022669">
    <property type="entry name" value="Ribosomal_uL2_C"/>
</dbReference>
<dbReference type="InterPro" id="IPR022671">
    <property type="entry name" value="Ribosomal_uL2_CS"/>
</dbReference>
<dbReference type="InterPro" id="IPR014726">
    <property type="entry name" value="Ribosomal_uL2_dom3"/>
</dbReference>
<dbReference type="InterPro" id="IPR022666">
    <property type="entry name" value="Ribosomal_uL2_RNA-bd_dom"/>
</dbReference>
<dbReference type="InterPro" id="IPR008991">
    <property type="entry name" value="Translation_prot_SH3-like_sf"/>
</dbReference>
<dbReference type="NCBIfam" id="TIGR01171">
    <property type="entry name" value="rplB_bact"/>
    <property type="match status" value="1"/>
</dbReference>
<dbReference type="PANTHER" id="PTHR13691:SF5">
    <property type="entry name" value="LARGE RIBOSOMAL SUBUNIT PROTEIN UL2M"/>
    <property type="match status" value="1"/>
</dbReference>
<dbReference type="PANTHER" id="PTHR13691">
    <property type="entry name" value="RIBOSOMAL PROTEIN L2"/>
    <property type="match status" value="1"/>
</dbReference>
<dbReference type="Pfam" id="PF00181">
    <property type="entry name" value="Ribosomal_L2"/>
    <property type="match status" value="1"/>
</dbReference>
<dbReference type="Pfam" id="PF03947">
    <property type="entry name" value="Ribosomal_L2_C"/>
    <property type="match status" value="1"/>
</dbReference>
<dbReference type="PIRSF" id="PIRSF002158">
    <property type="entry name" value="Ribosomal_L2"/>
    <property type="match status" value="1"/>
</dbReference>
<dbReference type="SMART" id="SM01383">
    <property type="entry name" value="Ribosomal_L2"/>
    <property type="match status" value="1"/>
</dbReference>
<dbReference type="SMART" id="SM01382">
    <property type="entry name" value="Ribosomal_L2_C"/>
    <property type="match status" value="1"/>
</dbReference>
<dbReference type="SUPFAM" id="SSF50249">
    <property type="entry name" value="Nucleic acid-binding proteins"/>
    <property type="match status" value="1"/>
</dbReference>
<dbReference type="SUPFAM" id="SSF50104">
    <property type="entry name" value="Translation proteins SH3-like domain"/>
    <property type="match status" value="1"/>
</dbReference>
<dbReference type="PROSITE" id="PS00467">
    <property type="entry name" value="RIBOSOMAL_L2"/>
    <property type="match status" value="1"/>
</dbReference>